<comment type="similarity">
    <text evidence="1">Belongs to the UPF0148 family.</text>
</comment>
<gene>
    <name type="ordered locus">YG5714_1353</name>
</gene>
<evidence type="ECO:0000255" key="1">
    <source>
        <dbReference type="HAMAP-Rule" id="MF_00343"/>
    </source>
</evidence>
<organism>
    <name type="scientific">Saccharolobus islandicus (strain Y.G.57.14 / Yellowstone #1)</name>
    <name type="common">Sulfolobus islandicus</name>
    <dbReference type="NCBI Taxonomy" id="439386"/>
    <lineage>
        <taxon>Archaea</taxon>
        <taxon>Thermoproteota</taxon>
        <taxon>Thermoprotei</taxon>
        <taxon>Sulfolobales</taxon>
        <taxon>Sulfolobaceae</taxon>
        <taxon>Saccharolobus</taxon>
    </lineage>
</organism>
<proteinExistence type="inferred from homology"/>
<dbReference type="EMBL" id="CP001403">
    <property type="protein sequence ID" value="ACP45620.1"/>
    <property type="molecule type" value="Genomic_DNA"/>
</dbReference>
<dbReference type="RefSeq" id="WP_010923073.1">
    <property type="nucleotide sequence ID" value="NC_012622.1"/>
</dbReference>
<dbReference type="SMR" id="C3NE81"/>
<dbReference type="KEGG" id="siy:YG5714_1353"/>
<dbReference type="HOGENOM" id="CLU_142653_1_0_2"/>
<dbReference type="Proteomes" id="UP000002308">
    <property type="component" value="Chromosome"/>
</dbReference>
<dbReference type="HAMAP" id="MF_00343">
    <property type="entry name" value="UPF0148"/>
    <property type="match status" value="1"/>
</dbReference>
<dbReference type="InterPro" id="IPR009563">
    <property type="entry name" value="SSSCA1"/>
</dbReference>
<dbReference type="InterPro" id="IPR022954">
    <property type="entry name" value="UPF0148"/>
</dbReference>
<dbReference type="NCBIfam" id="NF001644">
    <property type="entry name" value="PRK00420.1-1"/>
    <property type="match status" value="1"/>
</dbReference>
<dbReference type="NCBIfam" id="NF001647">
    <property type="entry name" value="PRK00420.1-4"/>
    <property type="match status" value="1"/>
</dbReference>
<dbReference type="Pfam" id="PF06677">
    <property type="entry name" value="Auto_anti-p27"/>
    <property type="match status" value="1"/>
</dbReference>
<name>Y1353_SACI7</name>
<accession>C3NE81</accession>
<sequence>MTNESEVGVKKAAELLRQGATMLEEACPICKMPLFKLKNGDVVCPVHGKVYIVKSDDEEKIVKRNLQLDEIESILIDGLYLSAKKMKEDPLDSERIIQIIRYLDALERLRKIKINSSE</sequence>
<reference key="1">
    <citation type="journal article" date="2009" name="Proc. Natl. Acad. Sci. U.S.A.">
        <title>Biogeography of the Sulfolobus islandicus pan-genome.</title>
        <authorList>
            <person name="Reno M.L."/>
            <person name="Held N.L."/>
            <person name="Fields C.J."/>
            <person name="Burke P.V."/>
            <person name="Whitaker R.J."/>
        </authorList>
    </citation>
    <scope>NUCLEOTIDE SEQUENCE [LARGE SCALE GENOMIC DNA]</scope>
    <source>
        <strain>Y.G.57.14 / Yellowstone #1</strain>
    </source>
</reference>
<protein>
    <recommendedName>
        <fullName evidence="1">UPF0148 protein YG5714_1353</fullName>
    </recommendedName>
</protein>
<feature type="chain" id="PRO_1000205287" description="UPF0148 protein YG5714_1353">
    <location>
        <begin position="1"/>
        <end position="118"/>
    </location>
</feature>